<evidence type="ECO:0000250" key="1">
    <source>
        <dbReference type="UniProtKB" id="P32455"/>
    </source>
</evidence>
<evidence type="ECO:0000250" key="2">
    <source>
        <dbReference type="UniProtKB" id="Q96PP8"/>
    </source>
</evidence>
<evidence type="ECO:0000255" key="3"/>
<evidence type="ECO:0000255" key="4">
    <source>
        <dbReference type="PROSITE-ProRule" id="PRU01052"/>
    </source>
</evidence>
<evidence type="ECO:0000269" key="5">
    <source>
    </source>
</evidence>
<evidence type="ECO:0000269" key="6">
    <source>
    </source>
</evidence>
<evidence type="ECO:0000269" key="7">
    <source>
    </source>
</evidence>
<evidence type="ECO:0000269" key="8">
    <source>
    </source>
</evidence>
<evidence type="ECO:0000269" key="9">
    <source>
    </source>
</evidence>
<evidence type="ECO:0000269" key="10">
    <source>
    </source>
</evidence>
<evidence type="ECO:0000269" key="11">
    <source>
    </source>
</evidence>
<evidence type="ECO:0000269" key="12">
    <source>
    </source>
</evidence>
<evidence type="ECO:0000269" key="13">
    <source>
    </source>
</evidence>
<evidence type="ECO:0000303" key="14">
    <source>
    </source>
</evidence>
<evidence type="ECO:0000305" key="15"/>
<evidence type="ECO:0000312" key="16">
    <source>
        <dbReference type="MGI" id="MGI:2429943"/>
    </source>
</evidence>
<comment type="function">
    <text evidence="2 7 8 9 10 11 12 13">Interferon (IFN)-inducible GTPase that plays important roles in innate immunity against a diverse range of bacterial, viral and protozoan pathogens (PubMed:22461501, PubMed:24715728, PubMed:24739961, PubMed:25774715, PubMed:25774716, PubMed:27693356, PubMed:30589883). Hydrolyzes GTP, but in contrast to other family members, does not produce GMP (By similarity). Following infection, recruited to the pathogen-containing vacuoles or vacuole-escaped bacteria and acts as a positive regulator of inflammasome assembly by promoting the release of inflammasome ligands from bacteria (PubMed:24715728, PubMed:24739961, PubMed:25774715, PubMed:25774716). Acts by promoting lysis of pathogen-containing vacuoles, releasing pathogens into the cytosol (PubMed:24715728, PubMed:24739961, PubMed:25774715, PubMed:25774716). Following pathogen release in the cytosol, promotes recruitment of proteins that mediate bacterial cytolysis, such as Gm12250/Irgb10: this liberates ligands that are detected by inflammasomes, such as lipopolysaccharide (LPS) that activates the non-canonical CASP4/CASP11 inflammasome or double-stranded DNA (dsDNA) that activates the AIM2 inflammasome (PubMed:24715728, PubMed:24739961, PubMed:25774715, PubMed:25774716, PubMed:27693356, PubMed:30589883). As an activator of NLRP3 inflammasome assembly: promotes selective NLRP3 inflammasome assembly in response to microbial and soluble, but not crystalline, agents (PubMed:22461501). Independently of its GTPase activity, acts as an inhibitor of various viruses infectivity by inhibiting FURIN-mediated maturation of viral envelope proteins (By similarity).</text>
</comment>
<comment type="catalytic activity">
    <reaction evidence="2">
        <text>GTP + H2O = GDP + phosphate + H(+)</text>
        <dbReference type="Rhea" id="RHEA:19669"/>
        <dbReference type="ChEBI" id="CHEBI:15377"/>
        <dbReference type="ChEBI" id="CHEBI:15378"/>
        <dbReference type="ChEBI" id="CHEBI:37565"/>
        <dbReference type="ChEBI" id="CHEBI:43474"/>
        <dbReference type="ChEBI" id="CHEBI:58189"/>
    </reaction>
    <physiologicalReaction direction="left-to-right" evidence="2">
        <dbReference type="Rhea" id="RHEA:19670"/>
    </physiologicalReaction>
</comment>
<comment type="subunit">
    <text evidence="2">Homodimer; homodimerizes upon GTP-binding, forming a close face-to-face dimer. Heterodimer with other family members, including GBP1, GBP2, GBP3 and GBP4. May also form tetramers (dimer of dimers) in the presence of GTP. Interacts with NLRP3, possibly in its tetrameric form, and promotes PYCARD/ASC polymerization.</text>
</comment>
<comment type="subcellular location">
    <subcellularLocation>
        <location evidence="6">Cytoplasmic vesicle membrane</location>
        <topology evidence="2">Lipid-anchor</topology>
    </subcellularLocation>
    <subcellularLocation>
        <location evidence="2">Golgi apparatus membrane</location>
        <topology evidence="2">Lipid-anchor</topology>
    </subcellularLocation>
    <subcellularLocation>
        <location evidence="2">Cytoplasm</location>
    </subcellularLocation>
</comment>
<comment type="alternative products">
    <event type="alternative splicing"/>
    <isoform>
        <id>Q8CFB4-1</id>
        <name>1</name>
        <sequence type="displayed"/>
    </isoform>
    <isoform>
        <id>Q8CFB4-2</id>
        <name>2</name>
        <name>GBP-5a</name>
        <sequence type="described" ref="VSP_057889 VSP_057890"/>
    </isoform>
</comment>
<comment type="tissue specificity">
    <text evidence="5">Low expression, if any, in many tissues in the absence of stimulation.</text>
</comment>
<comment type="induction">
    <text evidence="5 6 10">Strongly up-regulated by IFNG and, at lower levels, by LPS. The LPS-induced increase is attenuated in the presence of dexamethasone (PubMed:12396730, PubMed:18025219). Up-regulated by TNF in certain strains (PubMed:12396730). Up-regulation by a combination of IFNG and TNF is synergistic, even in strains that do not respond to TNF alone (PubMed:12396730). By IRF1 in response to bacterial infection (PubMed:25774715).</text>
</comment>
<comment type="PTM">
    <text evidence="2">Isoprenylation is required for proper subcellular location.</text>
</comment>
<comment type="disruption phenotype">
    <text evidence="7">Mutant mice exhibit impaired host defense and NLRP3-dependent inflammatory responses. During LPS-induced sepsis, knockout animals show 60 to 75% reduction in IL1B and IL-18 serum levels compared to wild-type mice. Orogastric challenge with Listeria monocytogenes leads to higher bacterial burdens, discernible weight loss, and 50 to 80% fewer leukocytes expressing active CASP1 in mesenteric lymph nodes compared to wild-type counterparts.</text>
</comment>
<comment type="similarity">
    <text evidence="4">Belongs to the TRAFAC class dynamin-like GTPase superfamily. GB1/RHD3 GTPase family. GB1 subfamily.</text>
</comment>
<reference key="1">
    <citation type="journal article" date="2002" name="J. Interferon Cytokine Res.">
        <title>Murine GBP-5, a new member of the murine guanylate-binding protein family, is coordinately regulated with other GBPs in vivo and in vitro.</title>
        <authorList>
            <person name="Nguyen T.T."/>
            <person name="Hu Y."/>
            <person name="Widney D.P."/>
            <person name="Mar R.C."/>
            <person name="Smith J.B."/>
        </authorList>
    </citation>
    <scope>NUCLEOTIDE SEQUENCE [MRNA] (ISOFORMS 1 AND 2)</scope>
    <scope>TISSUE SPECIFICITY</scope>
    <scope>INDUCTION BY IFNG; LPS AND TNF</scope>
    <source>
        <strain>Swiss Webster</strain>
        <tissue>Lung</tissue>
    </source>
</reference>
<reference key="2">
    <citation type="submission" date="2002-07" db="EMBL/GenBank/DDBJ databases">
        <authorList>
            <person name="Adams M."/>
            <person name="Mural R."/>
        </authorList>
    </citation>
    <scope>NUCLEOTIDE SEQUENCE [GENOMIC DNA]</scope>
</reference>
<reference key="3">
    <citation type="journal article" date="2009" name="PLoS Biol.">
        <title>Lineage-specific biology revealed by a finished genome assembly of the mouse.</title>
        <authorList>
            <person name="Church D.M."/>
            <person name="Goodstadt L."/>
            <person name="Hillier L.W."/>
            <person name="Zody M.C."/>
            <person name="Goldstein S."/>
            <person name="She X."/>
            <person name="Bult C.J."/>
            <person name="Agarwala R."/>
            <person name="Cherry J.L."/>
            <person name="DiCuccio M."/>
            <person name="Hlavina W."/>
            <person name="Kapustin Y."/>
            <person name="Meric P."/>
            <person name="Maglott D."/>
            <person name="Birtle Z."/>
            <person name="Marques A.C."/>
            <person name="Graves T."/>
            <person name="Zhou S."/>
            <person name="Teague B."/>
            <person name="Potamousis K."/>
            <person name="Churas C."/>
            <person name="Place M."/>
            <person name="Herschleb J."/>
            <person name="Runnheim R."/>
            <person name="Forrest D."/>
            <person name="Amos-Landgraf J."/>
            <person name="Schwartz D.C."/>
            <person name="Cheng Z."/>
            <person name="Lindblad-Toh K."/>
            <person name="Eichler E.E."/>
            <person name="Ponting C.P."/>
        </authorList>
    </citation>
    <scope>NUCLEOTIDE SEQUENCE [LARGE SCALE GENOMIC DNA]</scope>
    <source>
        <strain>C57BL/6J</strain>
    </source>
</reference>
<reference key="4">
    <citation type="journal article" date="2004" name="Genome Res.">
        <title>The status, quality, and expansion of the NIH full-length cDNA project: the Mammalian Gene Collection (MGC).</title>
        <authorList>
            <consortium name="The MGC Project Team"/>
        </authorList>
    </citation>
    <scope>NUCLEOTIDE SEQUENCE [LARGE SCALE MRNA] (ISOFORM 1)</scope>
    <source>
        <strain>NMRI</strain>
        <tissue>Mammary tumor</tissue>
    </source>
</reference>
<reference key="5">
    <citation type="journal article" date="2007" name="J. Immunol.">
        <title>Extensive characterization of IFN-induced GTPases mGBP1 to mGBP10 involved in host defense.</title>
        <authorList>
            <person name="Degrandi D."/>
            <person name="Konermann C."/>
            <person name="Beuter-Gunia C."/>
            <person name="Kresse A."/>
            <person name="Wurthner J."/>
            <person name="Kurig S."/>
            <person name="Beer S."/>
            <person name="Pfeffer K."/>
        </authorList>
    </citation>
    <scope>INDUCTION</scope>
    <scope>SUBCELLULAR LOCATION</scope>
</reference>
<reference key="6">
    <citation type="journal article" date="2012" name="Science">
        <title>GBP5 promotes NLRP3 inflammasome assembly and immunity in mammals.</title>
        <authorList>
            <person name="Shenoy A.R."/>
            <person name="Wellington D.A."/>
            <person name="Kumar P."/>
            <person name="Kassa H."/>
            <person name="Booth C.J."/>
            <person name="Cresswell P."/>
            <person name="MacMicking J.D."/>
        </authorList>
    </citation>
    <scope>FUNCTION</scope>
    <scope>DISRUPTION PHENOTYPE</scope>
    <scope>INTERACTION WITH NLRP3</scope>
</reference>
<reference key="7">
    <citation type="journal article" date="2014" name="Nature">
        <title>Caspase-11 activation requires lysis of pathogen-containing vacuoles by IFN-induced GTPases.</title>
        <authorList>
            <person name="Meunier E."/>
            <person name="Dick M.S."/>
            <person name="Dreier R.F."/>
            <person name="Schuermann N."/>
            <person name="Kenzelmann Broz D."/>
            <person name="Warming S."/>
            <person name="Roose-Girma M."/>
            <person name="Bumann D."/>
            <person name="Kayagaki N."/>
            <person name="Takeda K."/>
            <person name="Yamamoto M."/>
            <person name="Broz P."/>
        </authorList>
    </citation>
    <scope>FUNCTION</scope>
</reference>
<reference key="8">
    <citation type="journal article" date="2014" name="Proc. Natl. Acad. Sci. U.S.A.">
        <title>Guanylate binding proteins promote caspase-11-dependent pyroptosis in response to cytoplasmic LPS.</title>
        <authorList>
            <person name="Pilla D.M."/>
            <person name="Hagar J.A."/>
            <person name="Haldar A.K."/>
            <person name="Mason A.K."/>
            <person name="Degrandi D."/>
            <person name="Pfeffer K."/>
            <person name="Ernst R.K."/>
            <person name="Yamamoto M."/>
            <person name="Miao E.A."/>
            <person name="Coers J."/>
        </authorList>
    </citation>
    <scope>FUNCTION</scope>
</reference>
<reference key="9">
    <citation type="journal article" date="2015" name="Nat. Immunol.">
        <title>The transcription factor IRF1 and guanylate-binding proteins target activation of the AIM2 inflammasome by Francisella infection.</title>
        <authorList>
            <person name="Man S.M."/>
            <person name="Karki R."/>
            <person name="Malireddi R.K."/>
            <person name="Neale G."/>
            <person name="Vogel P."/>
            <person name="Yamamoto M."/>
            <person name="Lamkanfi M."/>
            <person name="Kanneganti T.D."/>
        </authorList>
    </citation>
    <scope>FUNCTION</scope>
    <scope>INDUCTION</scope>
</reference>
<reference key="10">
    <citation type="journal article" date="2015" name="Nat. Immunol.">
        <title>Guanylate-binding proteins promote activation of the AIM2 inflammasome during infection with Francisella novicida.</title>
        <authorList>
            <person name="Meunier E."/>
            <person name="Wallet P."/>
            <person name="Dreier R.F."/>
            <person name="Costanzo S."/>
            <person name="Anton L."/>
            <person name="Ruehl S."/>
            <person name="Dussurgey S."/>
            <person name="Dick M.S."/>
            <person name="Kistner A."/>
            <person name="Rigard M."/>
            <person name="Degrandi D."/>
            <person name="Pfeffer K."/>
            <person name="Yamamoto M."/>
            <person name="Henry T."/>
            <person name="Broz P."/>
        </authorList>
    </citation>
    <scope>FUNCTION</scope>
</reference>
<reference key="11">
    <citation type="journal article" date="2016" name="Cell">
        <title>IRGB10 liberates bacterial ligands for sensing by the AIM2 and caspase-11-NLRP3 inflammasomes.</title>
        <authorList>
            <person name="Man S.M."/>
            <person name="Karki R."/>
            <person name="Sasai M."/>
            <person name="Place D.E."/>
            <person name="Kesavardhana S."/>
            <person name="Temirov J."/>
            <person name="Frase S."/>
            <person name="Zhu Q."/>
            <person name="Malireddi R.K.S."/>
            <person name="Kuriakose T."/>
            <person name="Peters J.L."/>
            <person name="Neale G."/>
            <person name="Brown S.A."/>
            <person name="Yamamoto M."/>
            <person name="Kanneganti T.D."/>
        </authorList>
    </citation>
    <scope>FUNCTION</scope>
</reference>
<reference key="12">
    <citation type="journal article" date="2018" name="PLoS Pathog.">
        <title>Guanylate-binding protein 5 licenses caspase-11 for Gasdermin-D mediated host resistance to Brucella abortus infection.</title>
        <authorList>
            <person name="Cerqueira D.M."/>
            <person name="Gomes M.T.R."/>
            <person name="Silva A.L.N."/>
            <person name="Rungue M."/>
            <person name="Assis N.R.G."/>
            <person name="Guimaraes E.S."/>
            <person name="Morais S.B."/>
            <person name="Broz P."/>
            <person name="Zamboni D.S."/>
            <person name="Oliveira S.C."/>
        </authorList>
    </citation>
    <scope>FUNCTION</scope>
</reference>
<keyword id="KW-0025">Alternative splicing</keyword>
<keyword id="KW-0929">Antimicrobial</keyword>
<keyword id="KW-0963">Cytoplasm</keyword>
<keyword id="KW-0968">Cytoplasmic vesicle</keyword>
<keyword id="KW-0333">Golgi apparatus</keyword>
<keyword id="KW-0342">GTP-binding</keyword>
<keyword id="KW-0378">Hydrolase</keyword>
<keyword id="KW-0391">Immunity</keyword>
<keyword id="KW-0395">Inflammatory response</keyword>
<keyword id="KW-0399">Innate immunity</keyword>
<keyword id="KW-0449">Lipoprotein</keyword>
<keyword id="KW-0472">Membrane</keyword>
<keyword id="KW-0488">Methylation</keyword>
<keyword id="KW-0547">Nucleotide-binding</keyword>
<keyword id="KW-0636">Prenylation</keyword>
<keyword id="KW-1185">Reference proteome</keyword>
<sequence>MAPEIHMPEPLCLIGSTEGHLVTNQEALKILSAITQPVVVVAIVGLYRTGKSYLMNKLAGKEKGFSVGSTVQSHTKGIWMWCVPHPQKPDHTLVLLDTEGLGDVEKDDKKNDTQIFALAILLSSTFVYNTMNKIDQGAIDLLHNVTELTDLLRTRNSSDSNQTEGEGPADMSFFPDLVWTLRDFFLDLQANGHAITSDEYLENSLKLKQGSDERTQTFNLPRLCIQKFFPVKKCFVFDAPALGSKLSQLPTLSNEELNSDFVQDLSEFCSHIFTQSKTKTLPGGIQVNGPRLESLVLTYVDAINSGALPSIENTVVTLARRENSAAVQKAIGHYDQLMSEKVQLPTETLQELLDLHRTCEREAIEIFRKHSFKDEGEFFQKELESLLSAKQDEICKKNADASAALCSTLLGSIFKPLEQEVAQEFYHKPGGHKLFLQRMEQLKANYRQQPGKGTQAEEVLQTYLNAKETVSRTILQTDQVLTDKEIQSKAEQERAEAARLEAQRLEAIRIQEEQRKAEMERQHQEQLRQIALEKARVAQEQQWILKQRAQEEADRIKAEQEAQLRALQQQLQHMREMNHHRRHHHDCVIS</sequence>
<name>GBP5_MOUSE</name>
<protein>
    <recommendedName>
        <fullName>Guanylate-binding protein 5</fullName>
        <ecNumber evidence="2">3.6.5.-</ecNumber>
    </recommendedName>
    <alternativeName>
        <fullName evidence="14">GTP-binding protein 5</fullName>
        <shortName evidence="14">GBP-5</shortName>
        <shortName>MuGBP-5</shortName>
    </alternativeName>
    <alternativeName>
        <fullName>Guanine nucleotide-binding protein 5</fullName>
    </alternativeName>
</protein>
<organism>
    <name type="scientific">Mus musculus</name>
    <name type="common">Mouse</name>
    <dbReference type="NCBI Taxonomy" id="10090"/>
    <lineage>
        <taxon>Eukaryota</taxon>
        <taxon>Metazoa</taxon>
        <taxon>Chordata</taxon>
        <taxon>Craniata</taxon>
        <taxon>Vertebrata</taxon>
        <taxon>Euteleostomi</taxon>
        <taxon>Mammalia</taxon>
        <taxon>Eutheria</taxon>
        <taxon>Euarchontoglires</taxon>
        <taxon>Glires</taxon>
        <taxon>Rodentia</taxon>
        <taxon>Myomorpha</taxon>
        <taxon>Muroidea</taxon>
        <taxon>Muridae</taxon>
        <taxon>Murinae</taxon>
        <taxon>Mus</taxon>
        <taxon>Mus</taxon>
    </lineage>
</organism>
<accession>Q8CFB4</accession>
<accession>E9QJR4</accession>
<accession>Q8CFA4</accession>
<accession>Q8CFA8</accession>
<dbReference type="EC" id="3.6.5.-" evidence="2"/>
<dbReference type="EMBL" id="AF422243">
    <property type="protein sequence ID" value="AAN31451.1"/>
    <property type="molecule type" value="mRNA"/>
</dbReference>
<dbReference type="EMBL" id="AF487898">
    <property type="protein sequence ID" value="AAN52282.1"/>
    <property type="molecule type" value="mRNA"/>
</dbReference>
<dbReference type="EMBL" id="AY128412">
    <property type="protein sequence ID" value="AAN46362.1"/>
    <property type="molecule type" value="Genomic_DNA"/>
</dbReference>
<dbReference type="EMBL" id="AC102108">
    <property type="status" value="NOT_ANNOTATED_CDS"/>
    <property type="molecule type" value="Genomic_DNA"/>
</dbReference>
<dbReference type="EMBL" id="BC058555">
    <property type="protein sequence ID" value="AAH58555.1"/>
    <property type="molecule type" value="mRNA"/>
</dbReference>
<dbReference type="CCDS" id="CCDS17877.1">
    <molecule id="Q8CFB4-1"/>
</dbReference>
<dbReference type="RefSeq" id="NP_705792.2">
    <molecule id="Q8CFB4-1"/>
    <property type="nucleotide sequence ID" value="NM_153564.2"/>
</dbReference>
<dbReference type="SMR" id="Q8CFB4"/>
<dbReference type="BioGRID" id="230914">
    <property type="interactions" value="2"/>
</dbReference>
<dbReference type="FunCoup" id="Q8CFB4">
    <property type="interactions" value="114"/>
</dbReference>
<dbReference type="STRING" id="10090.ENSMUSP00000087587"/>
<dbReference type="iPTMnet" id="Q8CFB4"/>
<dbReference type="PhosphoSitePlus" id="Q8CFB4"/>
<dbReference type="SwissPalm" id="Q8CFB4"/>
<dbReference type="ProteomicsDB" id="267770">
    <molecule id="Q8CFB4-1"/>
</dbReference>
<dbReference type="ProteomicsDB" id="267771">
    <molecule id="Q8CFB4-2"/>
</dbReference>
<dbReference type="Antibodypedia" id="33615">
    <property type="antibodies" value="327 antibodies from 32 providers"/>
</dbReference>
<dbReference type="DNASU" id="229898"/>
<dbReference type="Ensembl" id="ENSMUST00000090127.7">
    <molecule id="Q8CFB4-1"/>
    <property type="protein sequence ID" value="ENSMUSP00000087587.3"/>
    <property type="gene ID" value="ENSMUSG00000105504.5"/>
</dbReference>
<dbReference type="Ensembl" id="ENSMUST00000197459.2">
    <molecule id="Q8CFB4-2"/>
    <property type="protein sequence ID" value="ENSMUSP00000142938.2"/>
    <property type="gene ID" value="ENSMUSG00000105504.5"/>
</dbReference>
<dbReference type="GeneID" id="229898"/>
<dbReference type="KEGG" id="mmu:229898"/>
<dbReference type="UCSC" id="uc008rop.1">
    <molecule id="Q8CFB4-1"/>
    <property type="organism name" value="mouse"/>
</dbReference>
<dbReference type="AGR" id="MGI:2429943"/>
<dbReference type="CTD" id="115362"/>
<dbReference type="MGI" id="MGI:2429943">
    <property type="gene designation" value="Gbp5"/>
</dbReference>
<dbReference type="VEuPathDB" id="HostDB:ENSMUSG00000105504"/>
<dbReference type="GeneTree" id="ENSGT00940000162684"/>
<dbReference type="HOGENOM" id="CLU_018608_2_2_1"/>
<dbReference type="InParanoid" id="Q8CFB4"/>
<dbReference type="OMA" id="FFPIKKC"/>
<dbReference type="OrthoDB" id="2135133at2759"/>
<dbReference type="PhylomeDB" id="Q8CFB4"/>
<dbReference type="TreeFam" id="TF331602"/>
<dbReference type="BioGRID-ORCS" id="229898">
    <property type="hits" value="1 hit in 78 CRISPR screens"/>
</dbReference>
<dbReference type="ChiTaRS" id="Gbp5">
    <property type="organism name" value="mouse"/>
</dbReference>
<dbReference type="PRO" id="PR:Q8CFB4"/>
<dbReference type="Proteomes" id="UP000000589">
    <property type="component" value="Chromosome 3"/>
</dbReference>
<dbReference type="RNAct" id="Q8CFB4">
    <property type="molecule type" value="protein"/>
</dbReference>
<dbReference type="Bgee" id="ENSMUSG00000105504">
    <property type="expression patterns" value="Expressed in spleen and 47 other cell types or tissues"/>
</dbReference>
<dbReference type="ExpressionAtlas" id="Q8CFB4">
    <property type="expression patterns" value="baseline and differential"/>
</dbReference>
<dbReference type="GO" id="GO:0031410">
    <property type="term" value="C:cytoplasmic vesicle"/>
    <property type="evidence" value="ECO:0000314"/>
    <property type="project" value="MGI"/>
</dbReference>
<dbReference type="GO" id="GO:0030659">
    <property type="term" value="C:cytoplasmic vesicle membrane"/>
    <property type="evidence" value="ECO:0007669"/>
    <property type="project" value="UniProtKB-SubCell"/>
</dbReference>
<dbReference type="GO" id="GO:0000139">
    <property type="term" value="C:Golgi membrane"/>
    <property type="evidence" value="ECO:0007669"/>
    <property type="project" value="UniProtKB-SubCell"/>
</dbReference>
<dbReference type="GO" id="GO:0048471">
    <property type="term" value="C:perinuclear region of cytoplasm"/>
    <property type="evidence" value="ECO:0007669"/>
    <property type="project" value="Ensembl"/>
</dbReference>
<dbReference type="GO" id="GO:0106139">
    <property type="term" value="C:symbiont cell surface"/>
    <property type="evidence" value="ECO:0000314"/>
    <property type="project" value="UniProt"/>
</dbReference>
<dbReference type="GO" id="GO:0004866">
    <property type="term" value="F:endopeptidase inhibitor activity"/>
    <property type="evidence" value="ECO:0007669"/>
    <property type="project" value="Ensembl"/>
</dbReference>
<dbReference type="GO" id="GO:0003925">
    <property type="term" value="F:G protein activity"/>
    <property type="evidence" value="ECO:0000250"/>
    <property type="project" value="UniProt"/>
</dbReference>
<dbReference type="GO" id="GO:0005525">
    <property type="term" value="F:GTP binding"/>
    <property type="evidence" value="ECO:0007669"/>
    <property type="project" value="UniProtKB-KW"/>
</dbReference>
<dbReference type="GO" id="GO:0003924">
    <property type="term" value="F:GTPase activity"/>
    <property type="evidence" value="ECO:0000250"/>
    <property type="project" value="UniProtKB"/>
</dbReference>
<dbReference type="GO" id="GO:0030695">
    <property type="term" value="F:GTPase regulator activity"/>
    <property type="evidence" value="ECO:0000250"/>
    <property type="project" value="UniProt"/>
</dbReference>
<dbReference type="GO" id="GO:0042803">
    <property type="term" value="F:protein homodimerization activity"/>
    <property type="evidence" value="ECO:0000250"/>
    <property type="project" value="UniProtKB"/>
</dbReference>
<dbReference type="GO" id="GO:0002218">
    <property type="term" value="P:activation of innate immune response"/>
    <property type="evidence" value="ECO:0000315"/>
    <property type="project" value="UniProtKB"/>
</dbReference>
<dbReference type="GO" id="GO:0071222">
    <property type="term" value="P:cellular response to lipopolysaccharide"/>
    <property type="evidence" value="ECO:0000315"/>
    <property type="project" value="UniProtKB"/>
</dbReference>
<dbReference type="GO" id="GO:0071346">
    <property type="term" value="P:cellular response to type II interferon"/>
    <property type="evidence" value="ECO:0000314"/>
    <property type="project" value="MGI"/>
</dbReference>
<dbReference type="GO" id="GO:0051715">
    <property type="term" value="P:cytolysis in another organism"/>
    <property type="evidence" value="ECO:0000314"/>
    <property type="project" value="UniProtKB"/>
</dbReference>
<dbReference type="GO" id="GO:0042742">
    <property type="term" value="P:defense response to bacterium"/>
    <property type="evidence" value="ECO:0000314"/>
    <property type="project" value="UniProtKB"/>
</dbReference>
<dbReference type="GO" id="GO:0051607">
    <property type="term" value="P:defense response to virus"/>
    <property type="evidence" value="ECO:0000250"/>
    <property type="project" value="UniProtKB"/>
</dbReference>
<dbReference type="GO" id="GO:0006954">
    <property type="term" value="P:inflammatory response"/>
    <property type="evidence" value="ECO:0007669"/>
    <property type="project" value="UniProtKB-KW"/>
</dbReference>
<dbReference type="GO" id="GO:0140973">
    <property type="term" value="P:positive regulation of AIM2 inflammasome complex assembly"/>
    <property type="evidence" value="ECO:0000314"/>
    <property type="project" value="UniProtKB"/>
</dbReference>
<dbReference type="GO" id="GO:1900017">
    <property type="term" value="P:positive regulation of cytokine production involved in inflammatory response"/>
    <property type="evidence" value="ECO:0000315"/>
    <property type="project" value="UniProtKB"/>
</dbReference>
<dbReference type="GO" id="GO:0045089">
    <property type="term" value="P:positive regulation of innate immune response"/>
    <property type="evidence" value="ECO:0000315"/>
    <property type="project" value="UniProtKB"/>
</dbReference>
<dbReference type="GO" id="GO:0032731">
    <property type="term" value="P:positive regulation of interleukin-1 beta production"/>
    <property type="evidence" value="ECO:0000315"/>
    <property type="project" value="UniProtKB"/>
</dbReference>
<dbReference type="GO" id="GO:0032741">
    <property type="term" value="P:positive regulation of interleukin-18 production"/>
    <property type="evidence" value="ECO:0000315"/>
    <property type="project" value="UniProtKB"/>
</dbReference>
<dbReference type="GO" id="GO:1900227">
    <property type="term" value="P:positive regulation of NLRP3 inflammasome complex assembly"/>
    <property type="evidence" value="ECO:0000250"/>
    <property type="project" value="UniProtKB"/>
</dbReference>
<dbReference type="GO" id="GO:0140639">
    <property type="term" value="P:positive regulation of pyroptotic inflammatory response"/>
    <property type="evidence" value="ECO:0000314"/>
    <property type="project" value="UniProtKB"/>
</dbReference>
<dbReference type="GO" id="GO:0051289">
    <property type="term" value="P:protein homotetramerization"/>
    <property type="evidence" value="ECO:0000250"/>
    <property type="project" value="UniProtKB"/>
</dbReference>
<dbReference type="GO" id="GO:0034067">
    <property type="term" value="P:protein localization to Golgi apparatus"/>
    <property type="evidence" value="ECO:0007669"/>
    <property type="project" value="Ensembl"/>
</dbReference>
<dbReference type="GO" id="GO:0006605">
    <property type="term" value="P:protein targeting"/>
    <property type="evidence" value="ECO:0000314"/>
    <property type="project" value="UniProtKB"/>
</dbReference>
<dbReference type="GO" id="GO:0009617">
    <property type="term" value="P:response to bacterium"/>
    <property type="evidence" value="ECO:0000270"/>
    <property type="project" value="MGI"/>
</dbReference>
<dbReference type="CDD" id="cd01851">
    <property type="entry name" value="GBP"/>
    <property type="match status" value="1"/>
</dbReference>
<dbReference type="CDD" id="cd16269">
    <property type="entry name" value="GBP_C"/>
    <property type="match status" value="1"/>
</dbReference>
<dbReference type="FunFam" id="1.20.1000.10:FF:000001">
    <property type="entry name" value="Guanylate binding protein 1"/>
    <property type="match status" value="1"/>
</dbReference>
<dbReference type="FunFam" id="3.40.50.300:FF:000422">
    <property type="entry name" value="Guanylate-binding protein 1"/>
    <property type="match status" value="1"/>
</dbReference>
<dbReference type="Gene3D" id="1.20.1000.10">
    <property type="entry name" value="Guanylate-binding protein, C-terminal domain"/>
    <property type="match status" value="1"/>
</dbReference>
<dbReference type="Gene3D" id="3.40.50.300">
    <property type="entry name" value="P-loop containing nucleotide triphosphate hydrolases"/>
    <property type="match status" value="1"/>
</dbReference>
<dbReference type="InterPro" id="IPR030386">
    <property type="entry name" value="G_GB1_RHD3_dom"/>
</dbReference>
<dbReference type="InterPro" id="IPR037684">
    <property type="entry name" value="GBP_C"/>
</dbReference>
<dbReference type="InterPro" id="IPR003191">
    <property type="entry name" value="Guanylate-bd/ATL_C"/>
</dbReference>
<dbReference type="InterPro" id="IPR036543">
    <property type="entry name" value="Guanylate-bd_C_sf"/>
</dbReference>
<dbReference type="InterPro" id="IPR015894">
    <property type="entry name" value="Guanylate-bd_N"/>
</dbReference>
<dbReference type="InterPro" id="IPR027417">
    <property type="entry name" value="P-loop_NTPase"/>
</dbReference>
<dbReference type="PANTHER" id="PTHR10751">
    <property type="entry name" value="GUANYLATE BINDING PROTEIN"/>
    <property type="match status" value="1"/>
</dbReference>
<dbReference type="Pfam" id="PF02263">
    <property type="entry name" value="GBP"/>
    <property type="match status" value="1"/>
</dbReference>
<dbReference type="Pfam" id="PF02841">
    <property type="entry name" value="GBP_C"/>
    <property type="match status" value="1"/>
</dbReference>
<dbReference type="SUPFAM" id="SSF48340">
    <property type="entry name" value="Interferon-induced guanylate-binding protein 1 (GBP1), C-terminal domain"/>
    <property type="match status" value="1"/>
</dbReference>
<dbReference type="SUPFAM" id="SSF52540">
    <property type="entry name" value="P-loop containing nucleoside triphosphate hydrolases"/>
    <property type="match status" value="1"/>
</dbReference>
<dbReference type="PROSITE" id="PS51715">
    <property type="entry name" value="G_GB1_RHD3"/>
    <property type="match status" value="1"/>
</dbReference>
<gene>
    <name evidence="14 16" type="primary">Gbp5</name>
</gene>
<feature type="chain" id="PRO_0000190970" description="Guanylate-binding protein 5">
    <location>
        <begin position="1"/>
        <end position="587"/>
    </location>
</feature>
<feature type="propeptide" id="PRO_0000370786" description="Removed in mature form" evidence="3">
    <location>
        <begin position="588"/>
        <end position="590"/>
    </location>
</feature>
<feature type="domain" description="GB1/RHD3-type G" evidence="4">
    <location>
        <begin position="35"/>
        <end position="277"/>
    </location>
</feature>
<feature type="region of interest" description="GTPase domain (Globular)" evidence="1">
    <location>
        <begin position="1"/>
        <end position="310"/>
    </location>
</feature>
<feature type="region of interest" description="NLRP3-binding" evidence="2">
    <location>
        <begin position="1"/>
        <end position="306"/>
    </location>
</feature>
<feature type="region of interest" description="Required for tetramerization, but not for dimerization" evidence="2">
    <location>
        <begin position="529"/>
        <end position="590"/>
    </location>
</feature>
<feature type="binding site" evidence="2">
    <location>
        <begin position="45"/>
        <end position="52"/>
    </location>
    <ligand>
        <name>GTP</name>
        <dbReference type="ChEBI" id="CHEBI:37565"/>
    </ligand>
</feature>
<feature type="binding site" evidence="2">
    <location>
        <begin position="67"/>
        <end position="69"/>
    </location>
    <ligand>
        <name>GTP</name>
        <dbReference type="ChEBI" id="CHEBI:37565"/>
    </ligand>
</feature>
<feature type="binding site" evidence="2">
    <location>
        <begin position="182"/>
        <end position="183"/>
    </location>
    <ligand>
        <name>GTP</name>
        <dbReference type="ChEBI" id="CHEBI:37565"/>
    </ligand>
</feature>
<feature type="binding site" evidence="2">
    <location>
        <position position="246"/>
    </location>
    <ligand>
        <name>GTP</name>
        <dbReference type="ChEBI" id="CHEBI:37565"/>
    </ligand>
</feature>
<feature type="modified residue" description="Cysteine methyl ester" evidence="2">
    <location>
        <position position="587"/>
    </location>
</feature>
<feature type="lipid moiety-binding region" description="S-geranylgeranyl cysteine" evidence="2">
    <location>
        <position position="587"/>
    </location>
</feature>
<feature type="splice variant" id="VSP_057889" description="In isoform 2.">
    <location>
        <begin position="64"/>
        <end position="175"/>
    </location>
</feature>
<feature type="splice variant" id="VSP_057890" description="In isoform 2.">
    <original>EEADRIKAEQEAQLRALQQQLQHMREMNHHRRHHHDCVIS</original>
    <variation>GRCPVIWCLDLLLAEDEGPKQDLSQKLCCFGQEGGRLSGAEDGAASEALWISPFPETAGLCIPHCHPSNLPSVESRSQGGSRRGLRHKPLRPGGPLCTHQEGARLSGAEDGTASEALWLSPVLETVGLFIPHPHPCSLPSTDSRSEGGSRRGLRQKPLGLVDPCALTRKVAGCL</variation>
    <location>
        <begin position="551"/>
        <end position="590"/>
    </location>
</feature>
<feature type="sequence conflict" description="In Ref. 2; AAN46362." evidence="15" ref="2">
    <original>SKA</original>
    <variation>T</variation>
    <location>
        <begin position="488"/>
        <end position="490"/>
    </location>
</feature>
<feature type="sequence conflict" description="In Ref. 1; AAN31451/AAN52282 and 4; AAH58555." evidence="15" ref="1 4">
    <original>S</original>
    <variation>K</variation>
    <location>
        <position position="488"/>
    </location>
</feature>
<feature type="sequence conflict" description="In Ref. 1; AAN31451/AAN52282 and 4; AAH58555." evidence="15" ref="1 4">
    <original>E</original>
    <variation>K</variation>
    <location>
        <position position="501"/>
    </location>
</feature>
<proteinExistence type="evidence at protein level"/>